<reference key="1">
    <citation type="submission" date="2008-04" db="EMBL/GenBank/DDBJ databases">
        <title>Complete sequence of Yersinia pseudotuberculosis PB1/+.</title>
        <authorList>
            <person name="Copeland A."/>
            <person name="Lucas S."/>
            <person name="Lapidus A."/>
            <person name="Glavina del Rio T."/>
            <person name="Dalin E."/>
            <person name="Tice H."/>
            <person name="Bruce D."/>
            <person name="Goodwin L."/>
            <person name="Pitluck S."/>
            <person name="Munk A.C."/>
            <person name="Brettin T."/>
            <person name="Detter J.C."/>
            <person name="Han C."/>
            <person name="Tapia R."/>
            <person name="Schmutz J."/>
            <person name="Larimer F."/>
            <person name="Land M."/>
            <person name="Hauser L."/>
            <person name="Challacombe J.F."/>
            <person name="Green L."/>
            <person name="Lindler L.E."/>
            <person name="Nikolich M.P."/>
            <person name="Richardson P."/>
        </authorList>
    </citation>
    <scope>NUCLEOTIDE SEQUENCE [LARGE SCALE GENOMIC DNA]</scope>
    <source>
        <strain>PB1/+</strain>
    </source>
</reference>
<organism>
    <name type="scientific">Yersinia pseudotuberculosis serotype IB (strain PB1/+)</name>
    <dbReference type="NCBI Taxonomy" id="502801"/>
    <lineage>
        <taxon>Bacteria</taxon>
        <taxon>Pseudomonadati</taxon>
        <taxon>Pseudomonadota</taxon>
        <taxon>Gammaproteobacteria</taxon>
        <taxon>Enterobacterales</taxon>
        <taxon>Yersiniaceae</taxon>
        <taxon>Yersinia</taxon>
    </lineage>
</organism>
<feature type="chain" id="PRO_1000149341" description="2-isopropylmalate synthase">
    <location>
        <begin position="1"/>
        <end position="520"/>
    </location>
</feature>
<feature type="domain" description="Pyruvate carboxyltransferase" evidence="1">
    <location>
        <begin position="5"/>
        <end position="267"/>
    </location>
</feature>
<feature type="region of interest" description="Regulatory domain" evidence="1">
    <location>
        <begin position="392"/>
        <end position="520"/>
    </location>
</feature>
<feature type="binding site" evidence="1">
    <location>
        <position position="14"/>
    </location>
    <ligand>
        <name>Mn(2+)</name>
        <dbReference type="ChEBI" id="CHEBI:29035"/>
    </ligand>
</feature>
<feature type="binding site" evidence="1">
    <location>
        <position position="202"/>
    </location>
    <ligand>
        <name>Mn(2+)</name>
        <dbReference type="ChEBI" id="CHEBI:29035"/>
    </ligand>
</feature>
<feature type="binding site" evidence="1">
    <location>
        <position position="204"/>
    </location>
    <ligand>
        <name>Mn(2+)</name>
        <dbReference type="ChEBI" id="CHEBI:29035"/>
    </ligand>
</feature>
<feature type="binding site" evidence="1">
    <location>
        <position position="238"/>
    </location>
    <ligand>
        <name>Mn(2+)</name>
        <dbReference type="ChEBI" id="CHEBI:29035"/>
    </ligand>
</feature>
<name>LEU1_YERPB</name>
<evidence type="ECO:0000255" key="1">
    <source>
        <dbReference type="HAMAP-Rule" id="MF_01025"/>
    </source>
</evidence>
<sequence length="520" mass="57375">MSQQVIIFDTTLRDGEQALQASLSVKEKLQIALALERMGVDIMEVGFPVSSPGDFESVRTIAQQVKNSRVCALARCVDKDIDVAAEALRIAEAFRIHVFLATSTLHIESKLKRSFDDVLAMAVHSVKRARNYTDDVEFSCEDAGRTPIDNLCRVVEAAITAGATTINIPDTVGYTTPYQFGGIITDLYERVPNIDKAIISVHCHDDLGMSVANSITAVQAGARQVEGTINGLGERAGNCSLEEVIMAIKVRHEMLGVHTNINHQEIYRTSQLVSKICNMPIPGNKAIVGSNAFAHSSGIHQDGVLKNRENYEIMTPESIGLKEVQLNLTSRSGRAAVKHRMEEMGYQDKDYNLDSLYDAFLKLADKKGQVFDYDLEALAFINKQQEEPEYYRLDYFSVQSGSSVMATASVKLVCGEEIKSEAATGNGPVDAVYQAINRITDYPIELVKYQLSAKGQGKDALGQVDIVVDHKGRRFHGVGLATDIVESSAKALVHVLNNIWRAHQVEKEKQRLQQNNQEMV</sequence>
<dbReference type="EC" id="2.3.3.13" evidence="1"/>
<dbReference type="EMBL" id="CP001048">
    <property type="protein sequence ID" value="ACC87682.1"/>
    <property type="molecule type" value="Genomic_DNA"/>
</dbReference>
<dbReference type="RefSeq" id="WP_002210453.1">
    <property type="nucleotide sequence ID" value="NZ_CP009780.1"/>
</dbReference>
<dbReference type="SMR" id="B2K4C9"/>
<dbReference type="GeneID" id="57974079"/>
<dbReference type="KEGG" id="ypb:YPTS_0698"/>
<dbReference type="PATRIC" id="fig|502801.10.peg.27"/>
<dbReference type="UniPathway" id="UPA00048">
    <property type="reaction ID" value="UER00070"/>
</dbReference>
<dbReference type="GO" id="GO:0005829">
    <property type="term" value="C:cytosol"/>
    <property type="evidence" value="ECO:0007669"/>
    <property type="project" value="TreeGrafter"/>
</dbReference>
<dbReference type="GO" id="GO:0003852">
    <property type="term" value="F:2-isopropylmalate synthase activity"/>
    <property type="evidence" value="ECO:0007669"/>
    <property type="project" value="UniProtKB-UniRule"/>
</dbReference>
<dbReference type="GO" id="GO:0003985">
    <property type="term" value="F:acetyl-CoA C-acetyltransferase activity"/>
    <property type="evidence" value="ECO:0007669"/>
    <property type="project" value="UniProtKB-UniRule"/>
</dbReference>
<dbReference type="GO" id="GO:0030145">
    <property type="term" value="F:manganese ion binding"/>
    <property type="evidence" value="ECO:0007669"/>
    <property type="project" value="UniProtKB-UniRule"/>
</dbReference>
<dbReference type="GO" id="GO:0009098">
    <property type="term" value="P:L-leucine biosynthetic process"/>
    <property type="evidence" value="ECO:0007669"/>
    <property type="project" value="UniProtKB-UniRule"/>
</dbReference>
<dbReference type="CDD" id="cd07940">
    <property type="entry name" value="DRE_TIM_IPMS"/>
    <property type="match status" value="1"/>
</dbReference>
<dbReference type="FunFam" id="1.10.238.260:FF:000001">
    <property type="entry name" value="2-isopropylmalate synthase"/>
    <property type="match status" value="1"/>
</dbReference>
<dbReference type="FunFam" id="3.20.20.70:FF:000010">
    <property type="entry name" value="2-isopropylmalate synthase"/>
    <property type="match status" value="1"/>
</dbReference>
<dbReference type="FunFam" id="3.30.160.270:FF:000001">
    <property type="entry name" value="2-isopropylmalate synthase"/>
    <property type="match status" value="1"/>
</dbReference>
<dbReference type="Gene3D" id="1.10.238.260">
    <property type="match status" value="1"/>
</dbReference>
<dbReference type="Gene3D" id="3.30.160.270">
    <property type="match status" value="1"/>
</dbReference>
<dbReference type="Gene3D" id="3.20.20.70">
    <property type="entry name" value="Aldolase class I"/>
    <property type="match status" value="1"/>
</dbReference>
<dbReference type="HAMAP" id="MF_01025">
    <property type="entry name" value="LeuA_type1"/>
    <property type="match status" value="1"/>
</dbReference>
<dbReference type="InterPro" id="IPR050073">
    <property type="entry name" value="2-IPM_HCS-like"/>
</dbReference>
<dbReference type="InterPro" id="IPR013709">
    <property type="entry name" value="2-isopropylmalate_synth_dimer"/>
</dbReference>
<dbReference type="InterPro" id="IPR002034">
    <property type="entry name" value="AIPM/Hcit_synth_CS"/>
</dbReference>
<dbReference type="InterPro" id="IPR013785">
    <property type="entry name" value="Aldolase_TIM"/>
</dbReference>
<dbReference type="InterPro" id="IPR054691">
    <property type="entry name" value="LeuA/HCS_post-cat"/>
</dbReference>
<dbReference type="InterPro" id="IPR036230">
    <property type="entry name" value="LeuA_allosteric_dom_sf"/>
</dbReference>
<dbReference type="InterPro" id="IPR005671">
    <property type="entry name" value="LeuA_bact_synth"/>
</dbReference>
<dbReference type="InterPro" id="IPR000891">
    <property type="entry name" value="PYR_CT"/>
</dbReference>
<dbReference type="NCBIfam" id="TIGR00973">
    <property type="entry name" value="leuA_bact"/>
    <property type="match status" value="1"/>
</dbReference>
<dbReference type="NCBIfam" id="NF002084">
    <property type="entry name" value="PRK00915.1-1"/>
    <property type="match status" value="1"/>
</dbReference>
<dbReference type="NCBIfam" id="NF002086">
    <property type="entry name" value="PRK00915.1-3"/>
    <property type="match status" value="1"/>
</dbReference>
<dbReference type="PANTHER" id="PTHR10277:SF9">
    <property type="entry name" value="2-ISOPROPYLMALATE SYNTHASE 1, CHLOROPLASTIC-RELATED"/>
    <property type="match status" value="1"/>
</dbReference>
<dbReference type="PANTHER" id="PTHR10277">
    <property type="entry name" value="HOMOCITRATE SYNTHASE-RELATED"/>
    <property type="match status" value="1"/>
</dbReference>
<dbReference type="Pfam" id="PF22617">
    <property type="entry name" value="HCS_D2"/>
    <property type="match status" value="1"/>
</dbReference>
<dbReference type="Pfam" id="PF00682">
    <property type="entry name" value="HMGL-like"/>
    <property type="match status" value="1"/>
</dbReference>
<dbReference type="Pfam" id="PF08502">
    <property type="entry name" value="LeuA_dimer"/>
    <property type="match status" value="1"/>
</dbReference>
<dbReference type="SMART" id="SM00917">
    <property type="entry name" value="LeuA_dimer"/>
    <property type="match status" value="1"/>
</dbReference>
<dbReference type="SUPFAM" id="SSF110921">
    <property type="entry name" value="2-isopropylmalate synthase LeuA, allosteric (dimerisation) domain"/>
    <property type="match status" value="1"/>
</dbReference>
<dbReference type="SUPFAM" id="SSF51569">
    <property type="entry name" value="Aldolase"/>
    <property type="match status" value="1"/>
</dbReference>
<dbReference type="PROSITE" id="PS00815">
    <property type="entry name" value="AIPM_HOMOCIT_SYNTH_1"/>
    <property type="match status" value="1"/>
</dbReference>
<dbReference type="PROSITE" id="PS00816">
    <property type="entry name" value="AIPM_HOMOCIT_SYNTH_2"/>
    <property type="match status" value="1"/>
</dbReference>
<dbReference type="PROSITE" id="PS50991">
    <property type="entry name" value="PYR_CT"/>
    <property type="match status" value="1"/>
</dbReference>
<comment type="function">
    <text evidence="1">Catalyzes the condensation of the acetyl group of acetyl-CoA with 3-methyl-2-oxobutanoate (2-ketoisovalerate) to form 3-carboxy-3-hydroxy-4-methylpentanoate (2-isopropylmalate).</text>
</comment>
<comment type="catalytic activity">
    <reaction evidence="1">
        <text>3-methyl-2-oxobutanoate + acetyl-CoA + H2O = (2S)-2-isopropylmalate + CoA + H(+)</text>
        <dbReference type="Rhea" id="RHEA:21524"/>
        <dbReference type="ChEBI" id="CHEBI:1178"/>
        <dbReference type="ChEBI" id="CHEBI:11851"/>
        <dbReference type="ChEBI" id="CHEBI:15377"/>
        <dbReference type="ChEBI" id="CHEBI:15378"/>
        <dbReference type="ChEBI" id="CHEBI:57287"/>
        <dbReference type="ChEBI" id="CHEBI:57288"/>
        <dbReference type="EC" id="2.3.3.13"/>
    </reaction>
</comment>
<comment type="cofactor">
    <cofactor evidence="1">
        <name>Mn(2+)</name>
        <dbReference type="ChEBI" id="CHEBI:29035"/>
    </cofactor>
</comment>
<comment type="pathway">
    <text evidence="1">Amino-acid biosynthesis; L-leucine biosynthesis; L-leucine from 3-methyl-2-oxobutanoate: step 1/4.</text>
</comment>
<comment type="subunit">
    <text evidence="1">Homodimer.</text>
</comment>
<comment type="subcellular location">
    <subcellularLocation>
        <location evidence="1">Cytoplasm</location>
    </subcellularLocation>
</comment>
<comment type="similarity">
    <text evidence="1">Belongs to the alpha-IPM synthase/homocitrate synthase family. LeuA type 1 subfamily.</text>
</comment>
<keyword id="KW-0028">Amino-acid biosynthesis</keyword>
<keyword id="KW-0100">Branched-chain amino acid biosynthesis</keyword>
<keyword id="KW-0963">Cytoplasm</keyword>
<keyword id="KW-0432">Leucine biosynthesis</keyword>
<keyword id="KW-0464">Manganese</keyword>
<keyword id="KW-0479">Metal-binding</keyword>
<keyword id="KW-0808">Transferase</keyword>
<accession>B2K4C9</accession>
<protein>
    <recommendedName>
        <fullName evidence="1">2-isopropylmalate synthase</fullName>
        <ecNumber evidence="1">2.3.3.13</ecNumber>
    </recommendedName>
    <alternativeName>
        <fullName evidence="1">Alpha-IPM synthase</fullName>
    </alternativeName>
    <alternativeName>
        <fullName evidence="1">Alpha-isopropylmalate synthase</fullName>
    </alternativeName>
</protein>
<gene>
    <name evidence="1" type="primary">leuA</name>
    <name type="ordered locus">YPTS_0698</name>
</gene>
<proteinExistence type="inferred from homology"/>